<sequence length="494" mass="53977">MSTGTFVVSQPLNYRGGARVEPVDASGTEKAFEPASGRVIATFTCSGEKEVNLAVQDAKAAFKIWSQKSGMERCRILLEAARIIRERRDEIATMETINNGKSIFEARWDIDTSWQCLEYYAGLAGSMAGEHIQLPGGSFGYTRREPLGVCVGIGAWNYPFQIACWKSAPALACGNAMVFKPSPFTPVSVLLLAEIYTEAGVPPGLFNVVQGGAATGQFLCQHRDVAKVSFTGSVPTGSKIMEMSAKGIKPVTLELGGKSPLIIFSDCDMKNAVKGALMANFLTQGEVCCNGTRVFVQKEILDQFTEEVVKQTQRIKIGDPLLEDTRMGPLINRPHLERVLGFVKVAKEQGAKVLCGGDVFVPEDPKLKDGYYMRPCVLTNCRDDMTCVKEEIFGPVMSILSFDTEAEVLERANDTTFGLAAGVFTRDIQRAHRVVAELQAGMCFINNYNVSPVELPFGGYKKSGFGRENGRVTIEYYSQLKTVCVEMGDVESAF</sequence>
<keyword id="KW-0007">Acetylation</keyword>
<keyword id="KW-0963">Cytoplasm</keyword>
<keyword id="KW-0520">NAD</keyword>
<keyword id="KW-0560">Oxidoreductase</keyword>
<keyword id="KW-1185">Reference proteome</keyword>
<evidence type="ECO:0000250" key="1">
    <source>
        <dbReference type="UniProtKB" id="P49189"/>
    </source>
</evidence>
<evidence type="ECO:0000250" key="2">
    <source>
        <dbReference type="UniProtKB" id="P56533"/>
    </source>
</evidence>
<evidence type="ECO:0000250" key="3">
    <source>
        <dbReference type="UniProtKB" id="Q9JLJ2"/>
    </source>
</evidence>
<evidence type="ECO:0000250" key="4">
    <source>
        <dbReference type="UniProtKB" id="Q9JLJ3"/>
    </source>
</evidence>
<evidence type="ECO:0000255" key="5">
    <source>
        <dbReference type="PROSITE-ProRule" id="PRU10007"/>
    </source>
</evidence>
<evidence type="ECO:0000255" key="6">
    <source>
        <dbReference type="PROSITE-ProRule" id="PRU10008"/>
    </source>
</evidence>
<evidence type="ECO:0000305" key="7"/>
<reference key="1">
    <citation type="submission" date="2005-09" db="EMBL/GenBank/DDBJ databases">
        <authorList>
            <consortium name="NIH - Mammalian Gene Collection (MGC) project"/>
        </authorList>
    </citation>
    <scope>NUCLEOTIDE SEQUENCE [LARGE SCALE MRNA]</scope>
    <source>
        <strain>Crossbred X Angus</strain>
        <tissue>Ileum</tissue>
    </source>
</reference>
<name>AL9A1_BOVIN</name>
<protein>
    <recommendedName>
        <fullName>4-trimethylaminobutyraldehyde dehydrogenase</fullName>
        <shortName>TMABA-DH</shortName>
        <shortName>TMABADH</shortName>
        <ecNumber evidence="1">1.2.1.47</ecNumber>
    </recommendedName>
    <alternativeName>
        <fullName>Aldehyde dehydrogenase family 9 member A1</fullName>
        <ecNumber evidence="1">1.2.1.3</ecNumber>
    </alternativeName>
    <alternativeName>
        <fullName>Formaldehyde dehydrogenase</fullName>
        <ecNumber evidence="1">1.2.1.46</ecNumber>
    </alternativeName>
    <alternativeName>
        <fullName>Gamma-aminobutyraldehyde dehydrogenase</fullName>
        <ecNumber evidence="1">1.2.1.19</ecNumber>
    </alternativeName>
</protein>
<comment type="function">
    <text evidence="1">Converts gamma-trimethylaminobutyraldehyde into gamma-butyrobetaine with high efficiency (in vitro). Can catalyze the irreversible oxidation of a broad range of aldehydes to the corresponding acids in an NAD-dependent reaction, but with low efficiency. Catalyzes the oxidation of aldehydes arising from biogenic amines and polyamines.</text>
</comment>
<comment type="catalytic activity">
    <reaction evidence="1">
        <text>4-(trimethylamino)butanal + NAD(+) + H2O = 4-(trimethylamino)butanoate + NADH + 2 H(+)</text>
        <dbReference type="Rhea" id="RHEA:17985"/>
        <dbReference type="ChEBI" id="CHEBI:15377"/>
        <dbReference type="ChEBI" id="CHEBI:15378"/>
        <dbReference type="ChEBI" id="CHEBI:16244"/>
        <dbReference type="ChEBI" id="CHEBI:18020"/>
        <dbReference type="ChEBI" id="CHEBI:57540"/>
        <dbReference type="ChEBI" id="CHEBI:57945"/>
        <dbReference type="EC" id="1.2.1.47"/>
    </reaction>
</comment>
<comment type="catalytic activity">
    <reaction evidence="1">
        <text>an aldehyde + NAD(+) + H2O = a carboxylate + NADH + 2 H(+)</text>
        <dbReference type="Rhea" id="RHEA:16185"/>
        <dbReference type="ChEBI" id="CHEBI:15377"/>
        <dbReference type="ChEBI" id="CHEBI:15378"/>
        <dbReference type="ChEBI" id="CHEBI:17478"/>
        <dbReference type="ChEBI" id="CHEBI:29067"/>
        <dbReference type="ChEBI" id="CHEBI:57540"/>
        <dbReference type="ChEBI" id="CHEBI:57945"/>
        <dbReference type="EC" id="1.2.1.3"/>
    </reaction>
</comment>
<comment type="catalytic activity">
    <reaction evidence="1">
        <text>4-aminobutanal + NAD(+) + H2O = 4-aminobutanoate + NADH + 2 H(+)</text>
        <dbReference type="Rhea" id="RHEA:19105"/>
        <dbReference type="ChEBI" id="CHEBI:15377"/>
        <dbReference type="ChEBI" id="CHEBI:15378"/>
        <dbReference type="ChEBI" id="CHEBI:57540"/>
        <dbReference type="ChEBI" id="CHEBI:57945"/>
        <dbReference type="ChEBI" id="CHEBI:58264"/>
        <dbReference type="ChEBI" id="CHEBI:59888"/>
        <dbReference type="EC" id="1.2.1.19"/>
    </reaction>
</comment>
<comment type="catalytic activity">
    <reaction evidence="1">
        <text>formaldehyde + NAD(+) + H2O = formate + NADH + 2 H(+)</text>
        <dbReference type="Rhea" id="RHEA:16425"/>
        <dbReference type="ChEBI" id="CHEBI:15377"/>
        <dbReference type="ChEBI" id="CHEBI:15378"/>
        <dbReference type="ChEBI" id="CHEBI:15740"/>
        <dbReference type="ChEBI" id="CHEBI:16842"/>
        <dbReference type="ChEBI" id="CHEBI:57540"/>
        <dbReference type="ChEBI" id="CHEBI:57945"/>
        <dbReference type="EC" id="1.2.1.46"/>
    </reaction>
</comment>
<comment type="catalytic activity">
    <reaction evidence="1">
        <text>acetaldehyde + NAD(+) + H2O = acetate + NADH + 2 H(+)</text>
        <dbReference type="Rhea" id="RHEA:25294"/>
        <dbReference type="ChEBI" id="CHEBI:15343"/>
        <dbReference type="ChEBI" id="CHEBI:15377"/>
        <dbReference type="ChEBI" id="CHEBI:15378"/>
        <dbReference type="ChEBI" id="CHEBI:30089"/>
        <dbReference type="ChEBI" id="CHEBI:57540"/>
        <dbReference type="ChEBI" id="CHEBI:57945"/>
        <dbReference type="EC" id="1.2.1.3"/>
    </reaction>
</comment>
<comment type="catalytic activity">
    <reaction evidence="1">
        <text>imidazole-4-acetaldehyde + NAD(+) + H2O = imidazole-4-acetate + NADH + 2 H(+)</text>
        <dbReference type="Rhea" id="RHEA:31059"/>
        <dbReference type="ChEBI" id="CHEBI:15377"/>
        <dbReference type="ChEBI" id="CHEBI:15378"/>
        <dbReference type="ChEBI" id="CHEBI:27398"/>
        <dbReference type="ChEBI" id="CHEBI:57540"/>
        <dbReference type="ChEBI" id="CHEBI:57945"/>
        <dbReference type="ChEBI" id="CHEBI:57969"/>
    </reaction>
</comment>
<comment type="catalytic activity">
    <reaction evidence="1">
        <text>acrolein + NAD(+) + H2O = acrylate + NADH + 2 H(+)</text>
        <dbReference type="Rhea" id="RHEA:69084"/>
        <dbReference type="ChEBI" id="CHEBI:15368"/>
        <dbReference type="ChEBI" id="CHEBI:15377"/>
        <dbReference type="ChEBI" id="CHEBI:15378"/>
        <dbReference type="ChEBI" id="CHEBI:37080"/>
        <dbReference type="ChEBI" id="CHEBI:57540"/>
        <dbReference type="ChEBI" id="CHEBI:57945"/>
    </reaction>
</comment>
<comment type="catalytic activity">
    <reaction evidence="1">
        <text>(5-hydroxyindol-3-yl)acetaldehyde + NAD(+) + H2O = (5-hydroxyindol-3-yl)acetate + NADH + 2 H(+)</text>
        <dbReference type="Rhea" id="RHEA:31215"/>
        <dbReference type="ChEBI" id="CHEBI:15377"/>
        <dbReference type="ChEBI" id="CHEBI:15378"/>
        <dbReference type="ChEBI" id="CHEBI:50157"/>
        <dbReference type="ChEBI" id="CHEBI:57540"/>
        <dbReference type="ChEBI" id="CHEBI:57945"/>
        <dbReference type="ChEBI" id="CHEBI:62622"/>
    </reaction>
</comment>
<comment type="catalytic activity">
    <reaction evidence="1">
        <text>3,4-dihydroxyphenylacetaldehyde + NAD(+) + H2O = 3,4-dihydroxyphenylacetate + NADH + 2 H(+)</text>
        <dbReference type="Rhea" id="RHEA:69080"/>
        <dbReference type="ChEBI" id="CHEBI:15377"/>
        <dbReference type="ChEBI" id="CHEBI:15378"/>
        <dbReference type="ChEBI" id="CHEBI:17612"/>
        <dbReference type="ChEBI" id="CHEBI:27978"/>
        <dbReference type="ChEBI" id="CHEBI:57540"/>
        <dbReference type="ChEBI" id="CHEBI:57945"/>
    </reaction>
</comment>
<comment type="catalytic activity">
    <reaction evidence="1">
        <text>spermine monoaldehyde + NAD(+) + H2O = N-(2-carboxyethyl)spermidine + NADH + 2 H(+)</text>
        <dbReference type="Rhea" id="RHEA:69168"/>
        <dbReference type="ChEBI" id="CHEBI:15377"/>
        <dbReference type="ChEBI" id="CHEBI:15378"/>
        <dbReference type="ChEBI" id="CHEBI:57540"/>
        <dbReference type="ChEBI" id="CHEBI:57945"/>
        <dbReference type="ChEBI" id="CHEBI:180903"/>
        <dbReference type="ChEBI" id="CHEBI:180913"/>
    </reaction>
</comment>
<comment type="catalytic activity">
    <reaction evidence="1">
        <text>propanal + NAD(+) + H2O = propanoate + NADH + 2 H(+)</text>
        <dbReference type="Rhea" id="RHEA:67256"/>
        <dbReference type="ChEBI" id="CHEBI:15377"/>
        <dbReference type="ChEBI" id="CHEBI:15378"/>
        <dbReference type="ChEBI" id="CHEBI:17153"/>
        <dbReference type="ChEBI" id="CHEBI:17272"/>
        <dbReference type="ChEBI" id="CHEBI:57540"/>
        <dbReference type="ChEBI" id="CHEBI:57945"/>
    </reaction>
</comment>
<comment type="catalytic activity">
    <reaction evidence="1">
        <text>butanal + NAD(+) + H2O = butanoate + NADH + 2 H(+)</text>
        <dbReference type="Rhea" id="RHEA:69088"/>
        <dbReference type="ChEBI" id="CHEBI:15377"/>
        <dbReference type="ChEBI" id="CHEBI:15378"/>
        <dbReference type="ChEBI" id="CHEBI:15743"/>
        <dbReference type="ChEBI" id="CHEBI:17968"/>
        <dbReference type="ChEBI" id="CHEBI:57540"/>
        <dbReference type="ChEBI" id="CHEBI:57945"/>
    </reaction>
</comment>
<comment type="catalytic activity">
    <reaction evidence="1">
        <text>pentanal + NAD(+) + H2O = pentanoate + NADH + 2 H(+)</text>
        <dbReference type="Rhea" id="RHEA:69092"/>
        <dbReference type="ChEBI" id="CHEBI:15377"/>
        <dbReference type="ChEBI" id="CHEBI:15378"/>
        <dbReference type="ChEBI" id="CHEBI:31011"/>
        <dbReference type="ChEBI" id="CHEBI:57540"/>
        <dbReference type="ChEBI" id="CHEBI:57945"/>
        <dbReference type="ChEBI" id="CHEBI:84069"/>
    </reaction>
</comment>
<comment type="catalytic activity">
    <reaction evidence="1">
        <text>hexanal + NAD(+) + H2O = hexanoate + NADH + 2 H(+)</text>
        <dbReference type="Rhea" id="RHEA:67276"/>
        <dbReference type="ChEBI" id="CHEBI:15377"/>
        <dbReference type="ChEBI" id="CHEBI:15378"/>
        <dbReference type="ChEBI" id="CHEBI:17120"/>
        <dbReference type="ChEBI" id="CHEBI:57540"/>
        <dbReference type="ChEBI" id="CHEBI:57945"/>
        <dbReference type="ChEBI" id="CHEBI:88528"/>
    </reaction>
</comment>
<comment type="pathway">
    <text evidence="1">Amine and polyamine biosynthesis; carnitine biosynthesis.</text>
</comment>
<comment type="subunit">
    <text evidence="1">Homotetramer.</text>
</comment>
<comment type="subcellular location">
    <subcellularLocation>
        <location evidence="4">Cytoplasm</location>
        <location evidence="4">Cytosol</location>
    </subcellularLocation>
    <subcellularLocation>
        <location evidence="1">Cytoplasm</location>
    </subcellularLocation>
</comment>
<comment type="similarity">
    <text evidence="7">Belongs to the aldehyde dehydrogenase family.</text>
</comment>
<accession>Q2KJH9</accession>
<dbReference type="EC" id="1.2.1.47" evidence="1"/>
<dbReference type="EC" id="1.2.1.3" evidence="1"/>
<dbReference type="EC" id="1.2.1.46" evidence="1"/>
<dbReference type="EC" id="1.2.1.19" evidence="1"/>
<dbReference type="EMBL" id="BC105335">
    <property type="protein sequence ID" value="AAI05336.1"/>
    <property type="molecule type" value="mRNA"/>
</dbReference>
<dbReference type="RefSeq" id="NP_001039888.1">
    <property type="nucleotide sequence ID" value="NM_001046423.1"/>
</dbReference>
<dbReference type="SMR" id="Q2KJH9"/>
<dbReference type="FunCoup" id="Q2KJH9">
    <property type="interactions" value="842"/>
</dbReference>
<dbReference type="STRING" id="9913.ENSBTAP00000033996"/>
<dbReference type="PaxDb" id="9913-ENSBTAP00000033996"/>
<dbReference type="PeptideAtlas" id="Q2KJH9"/>
<dbReference type="GeneID" id="537539"/>
<dbReference type="KEGG" id="bta:537539"/>
<dbReference type="CTD" id="223"/>
<dbReference type="eggNOG" id="KOG2450">
    <property type="taxonomic scope" value="Eukaryota"/>
</dbReference>
<dbReference type="InParanoid" id="Q2KJH9"/>
<dbReference type="OrthoDB" id="310895at2759"/>
<dbReference type="UniPathway" id="UPA00118"/>
<dbReference type="Proteomes" id="UP000009136">
    <property type="component" value="Unplaced"/>
</dbReference>
<dbReference type="GO" id="GO:0005737">
    <property type="term" value="C:cytoplasm"/>
    <property type="evidence" value="ECO:0000250"/>
    <property type="project" value="UniProtKB"/>
</dbReference>
<dbReference type="GO" id="GO:0005829">
    <property type="term" value="C:cytosol"/>
    <property type="evidence" value="ECO:0007669"/>
    <property type="project" value="UniProtKB-SubCell"/>
</dbReference>
<dbReference type="GO" id="GO:0047105">
    <property type="term" value="F:4-trimethylammoniobutyraldehyde dehydrogenase activity"/>
    <property type="evidence" value="ECO:0000250"/>
    <property type="project" value="UniProtKB"/>
</dbReference>
<dbReference type="GO" id="GO:0140087">
    <property type="term" value="F:acetaldehyde dehydrogenase (NAD+) activity"/>
    <property type="evidence" value="ECO:0007669"/>
    <property type="project" value="RHEA"/>
</dbReference>
<dbReference type="GO" id="GO:0004029">
    <property type="term" value="F:aldehyde dehydrogenase (NAD+) activity"/>
    <property type="evidence" value="ECO:0000250"/>
    <property type="project" value="AgBase"/>
</dbReference>
<dbReference type="GO" id="GO:0019145">
    <property type="term" value="F:aminobutyraldehyde dehydrogenase (NAD+) activity"/>
    <property type="evidence" value="ECO:0000250"/>
    <property type="project" value="AgBase"/>
</dbReference>
<dbReference type="GO" id="GO:0018467">
    <property type="term" value="F:formaldehyde dehydrogenase (NAD+) activity"/>
    <property type="evidence" value="ECO:0000250"/>
    <property type="project" value="UniProtKB"/>
</dbReference>
<dbReference type="GO" id="GO:0006081">
    <property type="term" value="P:aldehyde metabolic process"/>
    <property type="evidence" value="ECO:0000250"/>
    <property type="project" value="AgBase"/>
</dbReference>
<dbReference type="GO" id="GO:0045329">
    <property type="term" value="P:carnitine biosynthetic process"/>
    <property type="evidence" value="ECO:0007669"/>
    <property type="project" value="UniProtKB-UniPathway"/>
</dbReference>
<dbReference type="GO" id="GO:0051289">
    <property type="term" value="P:protein homotetramerization"/>
    <property type="evidence" value="ECO:0000250"/>
    <property type="project" value="UniProtKB"/>
</dbReference>
<dbReference type="CDD" id="cd07090">
    <property type="entry name" value="ALDH_F9_TMBADH"/>
    <property type="match status" value="1"/>
</dbReference>
<dbReference type="FunFam" id="3.40.309.10:FF:000019">
    <property type="entry name" value="4-trimethylaminobutyraldehyde dehydrogenase isoform X1"/>
    <property type="match status" value="1"/>
</dbReference>
<dbReference type="FunFam" id="3.40.605.10:FF:000016">
    <property type="entry name" value="4-trimethylaminobutyraldehyde dehydrogenase isoform X1"/>
    <property type="match status" value="1"/>
</dbReference>
<dbReference type="Gene3D" id="3.40.605.10">
    <property type="entry name" value="Aldehyde Dehydrogenase, Chain A, domain 1"/>
    <property type="match status" value="1"/>
</dbReference>
<dbReference type="Gene3D" id="3.40.309.10">
    <property type="entry name" value="Aldehyde Dehydrogenase, Chain A, domain 2"/>
    <property type="match status" value="1"/>
</dbReference>
<dbReference type="InterPro" id="IPR016161">
    <property type="entry name" value="Ald_DH/histidinol_DH"/>
</dbReference>
<dbReference type="InterPro" id="IPR016163">
    <property type="entry name" value="Ald_DH_C"/>
</dbReference>
<dbReference type="InterPro" id="IPR016160">
    <property type="entry name" value="Ald_DH_CS_CYS"/>
</dbReference>
<dbReference type="InterPro" id="IPR029510">
    <property type="entry name" value="Ald_DH_CS_GLU"/>
</dbReference>
<dbReference type="InterPro" id="IPR016162">
    <property type="entry name" value="Ald_DH_N"/>
</dbReference>
<dbReference type="InterPro" id="IPR015590">
    <property type="entry name" value="Aldehyde_DH_dom"/>
</dbReference>
<dbReference type="NCBIfam" id="NF009725">
    <property type="entry name" value="PRK13252.1"/>
    <property type="match status" value="1"/>
</dbReference>
<dbReference type="PANTHER" id="PTHR11699">
    <property type="entry name" value="ALDEHYDE DEHYDROGENASE-RELATED"/>
    <property type="match status" value="1"/>
</dbReference>
<dbReference type="Pfam" id="PF00171">
    <property type="entry name" value="Aldedh"/>
    <property type="match status" value="1"/>
</dbReference>
<dbReference type="SUPFAM" id="SSF53720">
    <property type="entry name" value="ALDH-like"/>
    <property type="match status" value="1"/>
</dbReference>
<dbReference type="PROSITE" id="PS00070">
    <property type="entry name" value="ALDEHYDE_DEHYDR_CYS"/>
    <property type="match status" value="1"/>
</dbReference>
<dbReference type="PROSITE" id="PS00687">
    <property type="entry name" value="ALDEHYDE_DEHYDR_GLU"/>
    <property type="match status" value="1"/>
</dbReference>
<gene>
    <name type="primary">ALDH9A1</name>
</gene>
<proteinExistence type="evidence at transcript level"/>
<organism>
    <name type="scientific">Bos taurus</name>
    <name type="common">Bovine</name>
    <dbReference type="NCBI Taxonomy" id="9913"/>
    <lineage>
        <taxon>Eukaryota</taxon>
        <taxon>Metazoa</taxon>
        <taxon>Chordata</taxon>
        <taxon>Craniata</taxon>
        <taxon>Vertebrata</taxon>
        <taxon>Euteleostomi</taxon>
        <taxon>Mammalia</taxon>
        <taxon>Eutheria</taxon>
        <taxon>Laurasiatheria</taxon>
        <taxon>Artiodactyla</taxon>
        <taxon>Ruminantia</taxon>
        <taxon>Pecora</taxon>
        <taxon>Bovidae</taxon>
        <taxon>Bovinae</taxon>
        <taxon>Bos</taxon>
    </lineage>
</organism>
<feature type="initiator methionine" description="Removed" evidence="1">
    <location>
        <position position="1"/>
    </location>
</feature>
<feature type="chain" id="PRO_0000236270" description="4-trimethylaminobutyraldehyde dehydrogenase">
    <location>
        <begin position="2"/>
        <end position="494"/>
    </location>
</feature>
<feature type="active site" description="Proton acceptor" evidence="5">
    <location>
        <position position="254"/>
    </location>
</feature>
<feature type="active site" description="Nucleophile" evidence="6">
    <location>
        <position position="288"/>
    </location>
</feature>
<feature type="binding site" evidence="2">
    <location>
        <position position="180"/>
    </location>
    <ligand>
        <name>NAD(+)</name>
        <dbReference type="ChEBI" id="CHEBI:57540"/>
    </ligand>
</feature>
<feature type="binding site" evidence="2">
    <location>
        <begin position="232"/>
        <end position="236"/>
    </location>
    <ligand>
        <name>NAD(+)</name>
        <dbReference type="ChEBI" id="CHEBI:57540"/>
    </ligand>
</feature>
<feature type="binding site" evidence="2">
    <location>
        <position position="391"/>
    </location>
    <ligand>
        <name>NAD(+)</name>
        <dbReference type="ChEBI" id="CHEBI:57540"/>
    </ligand>
</feature>
<feature type="modified residue" description="N-acetylserine" evidence="1">
    <location>
        <position position="2"/>
    </location>
</feature>
<feature type="modified residue" description="N6-acetyllysine; alternate" evidence="3">
    <location>
        <position position="30"/>
    </location>
</feature>
<feature type="modified residue" description="N6-succinyllysine; alternate" evidence="3">
    <location>
        <position position="30"/>
    </location>
</feature>
<feature type="modified residue" description="N6-succinyllysine" evidence="3">
    <location>
        <position position="59"/>
    </location>
</feature>
<feature type="modified residue" description="N6-acetyllysine" evidence="1">
    <location>
        <position position="298"/>
    </location>
</feature>
<feature type="modified residue" description="N6-acetyllysine" evidence="3">
    <location>
        <position position="344"/>
    </location>
</feature>